<proteinExistence type="inferred from homology"/>
<protein>
    <recommendedName>
        <fullName>Genetic interactor of prohibitin 7, mitochondrial</fullName>
    </recommendedName>
</protein>
<feature type="transit peptide" description="Mitochondrion" evidence="2">
    <location>
        <begin position="1"/>
        <end position="24"/>
    </location>
</feature>
<feature type="chain" id="PRO_0000399742" description="Genetic interactor of prohibitin 7, mitochondrial">
    <location>
        <begin position="25"/>
        <end position="305"/>
    </location>
</feature>
<feature type="transmembrane region" description="Helical" evidence="2">
    <location>
        <begin position="250"/>
        <end position="266"/>
    </location>
</feature>
<comment type="function">
    <text evidence="1">Involved in respiratory growth and required for cell survival in the absence of prohibitins or GEM1.</text>
</comment>
<comment type="subcellular location">
    <subcellularLocation>
        <location evidence="1">Mitochondrion membrane</location>
        <topology evidence="1">Single-pass membrane protein</topology>
    </subcellularLocation>
</comment>
<comment type="similarity">
    <text evidence="3">Belongs to the GEP7 family.</text>
</comment>
<organism>
    <name type="scientific">Saccharomyces cerevisiae (strain AWRI1631)</name>
    <name type="common">Baker's yeast</name>
    <dbReference type="NCBI Taxonomy" id="545124"/>
    <lineage>
        <taxon>Eukaryota</taxon>
        <taxon>Fungi</taxon>
        <taxon>Dikarya</taxon>
        <taxon>Ascomycota</taxon>
        <taxon>Saccharomycotina</taxon>
        <taxon>Saccharomycetes</taxon>
        <taxon>Saccharomycetales</taxon>
        <taxon>Saccharomycetaceae</taxon>
        <taxon>Saccharomyces</taxon>
    </lineage>
</organism>
<accession>B5VIR6</accession>
<sequence>MVLSNVKIFRLKSHRAFRIGPMIKAVAGNLLVKRFYQPKLERIPPASLLLKQKIRLAQNGSTTSTENPISFSQTMSEIFSVLQPSAPDLDEDETSGLKRDHLLTERLNNGELGVIMNKFFNPSSTHNNQLIDTNILLQNFPKLSGNDLDLLDFAINEKMRGNWNDLKQDFIQLWYYKSFGFLGPRTQFVLTNSSPSLRSQFLKLPFIEYNWFLLQNNKNANILPADVQNVVKVFHLDDKRFSWKSIDPFSKAIISFVVFVSIYVWLDESAKQKTKELPAQKSTVISEIKKMGSLFILAVKSATHS</sequence>
<keyword id="KW-0472">Membrane</keyword>
<keyword id="KW-0496">Mitochondrion</keyword>
<keyword id="KW-0809">Transit peptide</keyword>
<keyword id="KW-0812">Transmembrane</keyword>
<keyword id="KW-1133">Transmembrane helix</keyword>
<name>GEP7_YEAS6</name>
<evidence type="ECO:0000250" key="1"/>
<evidence type="ECO:0000255" key="2"/>
<evidence type="ECO:0000305" key="3"/>
<gene>
    <name type="primary">GEP7</name>
    <name type="ORF">AWRI1631_71930</name>
</gene>
<dbReference type="EMBL" id="ABSV01000889">
    <property type="protein sequence ID" value="EDZ72179.1"/>
    <property type="molecule type" value="Genomic_DNA"/>
</dbReference>
<dbReference type="OrthoDB" id="41474at4893"/>
<dbReference type="Proteomes" id="UP000008988">
    <property type="component" value="Unassembled WGS sequence"/>
</dbReference>
<dbReference type="GO" id="GO:0031966">
    <property type="term" value="C:mitochondrial membrane"/>
    <property type="evidence" value="ECO:0007669"/>
    <property type="project" value="UniProtKB-SubCell"/>
</dbReference>
<reference key="1">
    <citation type="journal article" date="2008" name="FEMS Yeast Res.">
        <title>Comparative genome analysis of a Saccharomyces cerevisiae wine strain.</title>
        <authorList>
            <person name="Borneman A.R."/>
            <person name="Forgan A.H."/>
            <person name="Pretorius I.S."/>
            <person name="Chambers P.J."/>
        </authorList>
    </citation>
    <scope>NUCLEOTIDE SEQUENCE [LARGE SCALE GENOMIC DNA]</scope>
    <source>
        <strain>AWRI1631</strain>
    </source>
</reference>